<dbReference type="InParanoid" id="P80817"/>
<dbReference type="Proteomes" id="UP000004994">
    <property type="component" value="Unplaced"/>
</dbReference>
<dbReference type="GO" id="GO:0005576">
    <property type="term" value="C:extracellular region"/>
    <property type="evidence" value="ECO:0007669"/>
    <property type="project" value="UniProtKB-KW"/>
</dbReference>
<accession>P80817</accession>
<proteinExistence type="evidence at protein level"/>
<name>CWP21_SOLLC</name>
<comment type="subcellular location">
    <subcellularLocation>
        <location evidence="1">Secreted</location>
        <location evidence="1">Cell wall</location>
    </subcellularLocation>
</comment>
<reference evidence="3" key="1">
    <citation type="journal article" date="1997" name="J. Biol. Chem.">
        <title>Differential extraction and protein sequencing reveals major differences in patterns of primary cell wall proteins from plants.</title>
        <authorList>
            <person name="Robertson D."/>
            <person name="Mitchell G.P."/>
            <person name="Gilroy J.S."/>
            <person name="Gerrish C."/>
            <person name="Bolwell G.P."/>
            <person name="Slabas A.R."/>
        </authorList>
    </citation>
    <scope>PROTEIN SEQUENCE</scope>
    <scope>SUBCELLULAR LOCATION</scope>
</reference>
<sequence>ANAKVPSHTISNPF</sequence>
<organism>
    <name type="scientific">Solanum lycopersicum</name>
    <name type="common">Tomato</name>
    <name type="synonym">Lycopersicon esculentum</name>
    <dbReference type="NCBI Taxonomy" id="4081"/>
    <lineage>
        <taxon>Eukaryota</taxon>
        <taxon>Viridiplantae</taxon>
        <taxon>Streptophyta</taxon>
        <taxon>Embryophyta</taxon>
        <taxon>Tracheophyta</taxon>
        <taxon>Spermatophyta</taxon>
        <taxon>Magnoliopsida</taxon>
        <taxon>eudicotyledons</taxon>
        <taxon>Gunneridae</taxon>
        <taxon>Pentapetalae</taxon>
        <taxon>asterids</taxon>
        <taxon>lamiids</taxon>
        <taxon>Solanales</taxon>
        <taxon>Solanaceae</taxon>
        <taxon>Solanoideae</taxon>
        <taxon>Solaneae</taxon>
        <taxon>Solanum</taxon>
        <taxon>Solanum subgen. Lycopersicon</taxon>
    </lineage>
</organism>
<evidence type="ECO:0000269" key="1">
    <source>
    </source>
</evidence>
<evidence type="ECO:0000303" key="2">
    <source>
    </source>
</evidence>
<evidence type="ECO:0000305" key="3"/>
<protein>
    <recommendedName>
        <fullName>64 kDa cell wall protein</fullName>
    </recommendedName>
</protein>
<feature type="chain" id="PRO_0000079694" description="64 kDa cell wall protein">
    <location>
        <begin position="1"/>
        <end position="14" status="greater than"/>
    </location>
</feature>
<feature type="non-terminal residue" evidence="2">
    <location>
        <position position="14"/>
    </location>
</feature>
<keyword id="KW-0134">Cell wall</keyword>
<keyword id="KW-0903">Direct protein sequencing</keyword>
<keyword id="KW-1185">Reference proteome</keyword>
<keyword id="KW-0964">Secreted</keyword>